<name>RUVA_AGRFC</name>
<reference key="1">
    <citation type="journal article" date="2001" name="Science">
        <title>The genome of the natural genetic engineer Agrobacterium tumefaciens C58.</title>
        <authorList>
            <person name="Wood D.W."/>
            <person name="Setubal J.C."/>
            <person name="Kaul R."/>
            <person name="Monks D.E."/>
            <person name="Kitajima J.P."/>
            <person name="Okura V.K."/>
            <person name="Zhou Y."/>
            <person name="Chen L."/>
            <person name="Wood G.E."/>
            <person name="Almeida N.F. Jr."/>
            <person name="Woo L."/>
            <person name="Chen Y."/>
            <person name="Paulsen I.T."/>
            <person name="Eisen J.A."/>
            <person name="Karp P.D."/>
            <person name="Bovee D. Sr."/>
            <person name="Chapman P."/>
            <person name="Clendenning J."/>
            <person name="Deatherage G."/>
            <person name="Gillet W."/>
            <person name="Grant C."/>
            <person name="Kutyavin T."/>
            <person name="Levy R."/>
            <person name="Li M.-J."/>
            <person name="McClelland E."/>
            <person name="Palmieri A."/>
            <person name="Raymond C."/>
            <person name="Rouse G."/>
            <person name="Saenphimmachak C."/>
            <person name="Wu Z."/>
            <person name="Romero P."/>
            <person name="Gordon D."/>
            <person name="Zhang S."/>
            <person name="Yoo H."/>
            <person name="Tao Y."/>
            <person name="Biddle P."/>
            <person name="Jung M."/>
            <person name="Krespan W."/>
            <person name="Perry M."/>
            <person name="Gordon-Kamm B."/>
            <person name="Liao L."/>
            <person name="Kim S."/>
            <person name="Hendrick C."/>
            <person name="Zhao Z.-Y."/>
            <person name="Dolan M."/>
            <person name="Chumley F."/>
            <person name="Tingey S.V."/>
            <person name="Tomb J.-F."/>
            <person name="Gordon M.P."/>
            <person name="Olson M.V."/>
            <person name="Nester E.W."/>
        </authorList>
    </citation>
    <scope>NUCLEOTIDE SEQUENCE [LARGE SCALE GENOMIC DNA]</scope>
    <source>
        <strain>C58 / ATCC 33970</strain>
    </source>
</reference>
<reference key="2">
    <citation type="journal article" date="2001" name="Science">
        <title>Genome sequence of the plant pathogen and biotechnology agent Agrobacterium tumefaciens C58.</title>
        <authorList>
            <person name="Goodner B."/>
            <person name="Hinkle G."/>
            <person name="Gattung S."/>
            <person name="Miller N."/>
            <person name="Blanchard M."/>
            <person name="Qurollo B."/>
            <person name="Goldman B.S."/>
            <person name="Cao Y."/>
            <person name="Askenazi M."/>
            <person name="Halling C."/>
            <person name="Mullin L."/>
            <person name="Houmiel K."/>
            <person name="Gordon J."/>
            <person name="Vaudin M."/>
            <person name="Iartchouk O."/>
            <person name="Epp A."/>
            <person name="Liu F."/>
            <person name="Wollam C."/>
            <person name="Allinger M."/>
            <person name="Doughty D."/>
            <person name="Scott C."/>
            <person name="Lappas C."/>
            <person name="Markelz B."/>
            <person name="Flanagan C."/>
            <person name="Crowell C."/>
            <person name="Gurson J."/>
            <person name="Lomo C."/>
            <person name="Sear C."/>
            <person name="Strub G."/>
            <person name="Cielo C."/>
            <person name="Slater S."/>
        </authorList>
    </citation>
    <scope>NUCLEOTIDE SEQUENCE [LARGE SCALE GENOMIC DNA]</scope>
    <source>
        <strain>C58 / ATCC 33970</strain>
    </source>
</reference>
<feature type="chain" id="PRO_0000094597" description="Holliday junction branch migration complex subunit RuvA">
    <location>
        <begin position="1"/>
        <end position="205"/>
    </location>
</feature>
<feature type="region of interest" description="Domain I" evidence="1">
    <location>
        <begin position="1"/>
        <end position="64"/>
    </location>
</feature>
<feature type="region of interest" description="Domain II" evidence="1">
    <location>
        <begin position="65"/>
        <end position="143"/>
    </location>
</feature>
<feature type="region of interest" description="Flexible linker" evidence="1">
    <location>
        <begin position="144"/>
        <end position="153"/>
    </location>
</feature>
<feature type="region of interest" description="Domain III" evidence="1">
    <location>
        <begin position="153"/>
        <end position="205"/>
    </location>
</feature>
<dbReference type="EMBL" id="AE007870">
    <property type="protein sequence ID" value="AAK89682.1"/>
    <property type="molecule type" value="Genomic_DNA"/>
</dbReference>
<dbReference type="PIR" id="AG3014">
    <property type="entry name" value="AG3014"/>
</dbReference>
<dbReference type="PIR" id="H98269">
    <property type="entry name" value="H98269"/>
</dbReference>
<dbReference type="RefSeq" id="NP_356897.1">
    <property type="nucleotide sequence ID" value="NC_003063.2"/>
</dbReference>
<dbReference type="RefSeq" id="WP_010973279.1">
    <property type="nucleotide sequence ID" value="NC_003063.2"/>
</dbReference>
<dbReference type="SMR" id="Q8U9K5"/>
<dbReference type="STRING" id="176299.Atu3723"/>
<dbReference type="EnsemblBacteria" id="AAK89682">
    <property type="protein sequence ID" value="AAK89682"/>
    <property type="gene ID" value="Atu3723"/>
</dbReference>
<dbReference type="GeneID" id="1135597"/>
<dbReference type="KEGG" id="atu:Atu3723"/>
<dbReference type="PATRIC" id="fig|176299.10.peg.3556"/>
<dbReference type="eggNOG" id="COG0632">
    <property type="taxonomic scope" value="Bacteria"/>
</dbReference>
<dbReference type="HOGENOM" id="CLU_087936_3_0_5"/>
<dbReference type="OrthoDB" id="5293449at2"/>
<dbReference type="PhylomeDB" id="Q8U9K5"/>
<dbReference type="BioCyc" id="AGRO:ATU3723-MONOMER"/>
<dbReference type="Proteomes" id="UP000000813">
    <property type="component" value="Chromosome linear"/>
</dbReference>
<dbReference type="GO" id="GO:0005737">
    <property type="term" value="C:cytoplasm"/>
    <property type="evidence" value="ECO:0007669"/>
    <property type="project" value="UniProtKB-SubCell"/>
</dbReference>
<dbReference type="GO" id="GO:0009379">
    <property type="term" value="C:Holliday junction helicase complex"/>
    <property type="evidence" value="ECO:0007669"/>
    <property type="project" value="InterPro"/>
</dbReference>
<dbReference type="GO" id="GO:0048476">
    <property type="term" value="C:Holliday junction resolvase complex"/>
    <property type="evidence" value="ECO:0007669"/>
    <property type="project" value="UniProtKB-UniRule"/>
</dbReference>
<dbReference type="GO" id="GO:0005524">
    <property type="term" value="F:ATP binding"/>
    <property type="evidence" value="ECO:0007669"/>
    <property type="project" value="InterPro"/>
</dbReference>
<dbReference type="GO" id="GO:0000400">
    <property type="term" value="F:four-way junction DNA binding"/>
    <property type="evidence" value="ECO:0007669"/>
    <property type="project" value="UniProtKB-UniRule"/>
</dbReference>
<dbReference type="GO" id="GO:0009378">
    <property type="term" value="F:four-way junction helicase activity"/>
    <property type="evidence" value="ECO:0007669"/>
    <property type="project" value="InterPro"/>
</dbReference>
<dbReference type="GO" id="GO:0006310">
    <property type="term" value="P:DNA recombination"/>
    <property type="evidence" value="ECO:0007669"/>
    <property type="project" value="UniProtKB-UniRule"/>
</dbReference>
<dbReference type="GO" id="GO:0006281">
    <property type="term" value="P:DNA repair"/>
    <property type="evidence" value="ECO:0007669"/>
    <property type="project" value="UniProtKB-UniRule"/>
</dbReference>
<dbReference type="CDD" id="cd14332">
    <property type="entry name" value="UBA_RuvA_C"/>
    <property type="match status" value="1"/>
</dbReference>
<dbReference type="Gene3D" id="1.10.150.20">
    <property type="entry name" value="5' to 3' exonuclease, C-terminal subdomain"/>
    <property type="match status" value="1"/>
</dbReference>
<dbReference type="Gene3D" id="1.10.8.10">
    <property type="entry name" value="DNA helicase RuvA subunit, C-terminal domain"/>
    <property type="match status" value="1"/>
</dbReference>
<dbReference type="Gene3D" id="2.40.50.140">
    <property type="entry name" value="Nucleic acid-binding proteins"/>
    <property type="match status" value="1"/>
</dbReference>
<dbReference type="HAMAP" id="MF_00031">
    <property type="entry name" value="DNA_HJ_migration_RuvA"/>
    <property type="match status" value="1"/>
</dbReference>
<dbReference type="InterPro" id="IPR013849">
    <property type="entry name" value="DNA_helicase_Holl-junc_RuvA_I"/>
</dbReference>
<dbReference type="InterPro" id="IPR012340">
    <property type="entry name" value="NA-bd_OB-fold"/>
</dbReference>
<dbReference type="InterPro" id="IPR000085">
    <property type="entry name" value="RuvA"/>
</dbReference>
<dbReference type="InterPro" id="IPR010994">
    <property type="entry name" value="RuvA_2-like"/>
</dbReference>
<dbReference type="InterPro" id="IPR011114">
    <property type="entry name" value="RuvA_C"/>
</dbReference>
<dbReference type="InterPro" id="IPR036267">
    <property type="entry name" value="RuvA_C_sf"/>
</dbReference>
<dbReference type="NCBIfam" id="TIGR00084">
    <property type="entry name" value="ruvA"/>
    <property type="match status" value="1"/>
</dbReference>
<dbReference type="Pfam" id="PF14520">
    <property type="entry name" value="HHH_5"/>
    <property type="match status" value="1"/>
</dbReference>
<dbReference type="Pfam" id="PF07499">
    <property type="entry name" value="RuvA_C"/>
    <property type="match status" value="1"/>
</dbReference>
<dbReference type="Pfam" id="PF01330">
    <property type="entry name" value="RuvA_N"/>
    <property type="match status" value="1"/>
</dbReference>
<dbReference type="SUPFAM" id="SSF46929">
    <property type="entry name" value="DNA helicase RuvA subunit, C-terminal domain"/>
    <property type="match status" value="1"/>
</dbReference>
<dbReference type="SUPFAM" id="SSF50249">
    <property type="entry name" value="Nucleic acid-binding proteins"/>
    <property type="match status" value="1"/>
</dbReference>
<dbReference type="SUPFAM" id="SSF47781">
    <property type="entry name" value="RuvA domain 2-like"/>
    <property type="match status" value="1"/>
</dbReference>
<sequence>MIGKLKGSIEEIGADYVLVDVHGVCYVAYCSARTLSKIGSVGEAVVLFIETYVREDQLKLFGFVSALEREWFNLLQSVQGVGSKVALAVLSTLSPSELANAIALQDKTMISRAPGIGPKVAVRLVTELRNKAPAFAGDASASIGLKQELGEGVASAPVADAVSALTNLGYSRDQAANAVAAALKNGGEGGDSAKLIRLGLKELSR</sequence>
<evidence type="ECO:0000255" key="1">
    <source>
        <dbReference type="HAMAP-Rule" id="MF_00031"/>
    </source>
</evidence>
<gene>
    <name evidence="1" type="primary">ruvA</name>
    <name type="ordered locus">Atu3723</name>
    <name type="ORF">AGR_L_2223</name>
</gene>
<keyword id="KW-0963">Cytoplasm</keyword>
<keyword id="KW-0227">DNA damage</keyword>
<keyword id="KW-0233">DNA recombination</keyword>
<keyword id="KW-0234">DNA repair</keyword>
<keyword id="KW-0238">DNA-binding</keyword>
<keyword id="KW-1185">Reference proteome</keyword>
<protein>
    <recommendedName>
        <fullName evidence="1">Holliday junction branch migration complex subunit RuvA</fullName>
    </recommendedName>
</protein>
<comment type="function">
    <text evidence="1">The RuvA-RuvB-RuvC complex processes Holliday junction (HJ) DNA during genetic recombination and DNA repair, while the RuvA-RuvB complex plays an important role in the rescue of blocked DNA replication forks via replication fork reversal (RFR). RuvA specifically binds to HJ cruciform DNA, conferring on it an open structure. The RuvB hexamer acts as an ATP-dependent pump, pulling dsDNA into and through the RuvAB complex. HJ branch migration allows RuvC to scan DNA until it finds its consensus sequence, where it cleaves and resolves the cruciform DNA.</text>
</comment>
<comment type="subunit">
    <text evidence="1">Homotetramer. Forms an RuvA(8)-RuvB(12)-Holliday junction (HJ) complex. HJ DNA is sandwiched between 2 RuvA tetramers; dsDNA enters through RuvA and exits via RuvB. An RuvB hexamer assembles on each DNA strand where it exits the tetramer. Each RuvB hexamer is contacted by two RuvA subunits (via domain III) on 2 adjacent RuvB subunits; this complex drives branch migration. In the full resolvosome a probable DNA-RuvA(4)-RuvB(12)-RuvC(2) complex forms which resolves the HJ.</text>
</comment>
<comment type="subcellular location">
    <subcellularLocation>
        <location evidence="1">Cytoplasm</location>
    </subcellularLocation>
</comment>
<comment type="domain">
    <text evidence="1">Has three domains with a flexible linker between the domains II and III and assumes an 'L' shape. Domain III is highly mobile and contacts RuvB.</text>
</comment>
<comment type="similarity">
    <text evidence="1">Belongs to the RuvA family.</text>
</comment>
<proteinExistence type="inferred from homology"/>
<organism>
    <name type="scientific">Agrobacterium fabrum (strain C58 / ATCC 33970)</name>
    <name type="common">Agrobacterium tumefaciens (strain C58)</name>
    <dbReference type="NCBI Taxonomy" id="176299"/>
    <lineage>
        <taxon>Bacteria</taxon>
        <taxon>Pseudomonadati</taxon>
        <taxon>Pseudomonadota</taxon>
        <taxon>Alphaproteobacteria</taxon>
        <taxon>Hyphomicrobiales</taxon>
        <taxon>Rhizobiaceae</taxon>
        <taxon>Rhizobium/Agrobacterium group</taxon>
        <taxon>Agrobacterium</taxon>
        <taxon>Agrobacterium tumefaciens complex</taxon>
    </lineage>
</organism>
<accession>Q8U9K5</accession>